<evidence type="ECO:0000255" key="1">
    <source>
        <dbReference type="HAMAP-Rule" id="MF_04090"/>
    </source>
</evidence>
<evidence type="ECO:0000256" key="2">
    <source>
        <dbReference type="SAM" id="MobiDB-lite"/>
    </source>
</evidence>
<accession>Q5K037</accession>
<accession>Q86196</accession>
<feature type="chain" id="PRO_0000369848" description="Non-structural protein 3">
    <location>
        <begin position="1"/>
        <end position="347"/>
    </location>
</feature>
<feature type="region of interest" description="Disordered" evidence="2">
    <location>
        <begin position="274"/>
        <end position="321"/>
    </location>
</feature>
<feature type="coiled-coil region" evidence="1">
    <location>
        <begin position="230"/>
        <end position="257"/>
    </location>
</feature>
<feature type="compositionally biased region" description="Acidic residues" evidence="2">
    <location>
        <begin position="274"/>
        <end position="286"/>
    </location>
</feature>
<feature type="compositionally biased region" description="Acidic residues" evidence="2">
    <location>
        <begin position="294"/>
        <end position="305"/>
    </location>
</feature>
<feature type="compositionally biased region" description="Basic and acidic residues" evidence="2">
    <location>
        <begin position="306"/>
        <end position="317"/>
    </location>
</feature>
<feature type="sequence conflict" description="In Ref. 2; AAA47329." ref="2">
    <original>N</original>
    <variation>S</variation>
    <location>
        <position position="168"/>
    </location>
</feature>
<feature type="sequence conflict" description="In Ref. 2; AAA47329." ref="2">
    <original>E</original>
    <variation>G</variation>
    <location>
        <position position="248"/>
    </location>
</feature>
<feature type="sequence conflict" description="In Ref. 2; AAA47329." ref="2">
    <original>L</original>
    <variation>H</variation>
    <location>
        <position position="281"/>
    </location>
</feature>
<feature type="sequence conflict" description="In Ref. 2; AAA47329." ref="2">
    <original>N</original>
    <variation>S</variation>
    <location>
        <position position="292"/>
    </location>
</feature>
<keyword id="KW-0175">Coiled coil</keyword>
<keyword id="KW-1035">Host cytoplasm</keyword>
<keyword id="KW-0694">RNA-binding</keyword>
<keyword id="KW-0810">Translation regulation</keyword>
<comment type="function">
    <text evidence="1">May play a role in stimulating the translation of viral mRNAs.</text>
</comment>
<comment type="subcellular location">
    <subcellularLocation>
        <location evidence="1">Host cytoplasm</location>
    </subcellularLocation>
</comment>
<comment type="similarity">
    <text evidence="1">Belongs to the rotavirus NSP3 family.</text>
</comment>
<comment type="sequence caution">
    <conflict type="frameshift">
        <sequence resource="EMBL-CDS" id="AAA47329"/>
    </conflict>
</comment>
<name>NSP3_ROTGA</name>
<proteinExistence type="evidence at transcript level"/>
<sequence length="347" mass="40357">MALDALASILETVLRNCGINEISRVTTKFEEALDDCGMKVDDWREAYYKERFPKRMTATTMASQIMNFEIENLQLRNKAWAEGADRKFRLLSSFEIGNKDGHTILVPKTRNAEILLANSTSDLKLSSFPSEAVAKLAEENEKMRKQIEHLREQQTSKSTATLCEALENMTERMKLIEREKETVRRMFLECDKTNQRLRKQIQICEEEATDRLVLVNSHHREEILIMKREIYRLQMENVTLKEQIDSIEQELDHSNRIVRGLANRAGLVVDEVDSGNETSDLSDDSDHDDHENSESDLEDMMDPGEDERIPRGGENPRRQARMLQMREEMERLHEDMEILNLNLDLDI</sequence>
<organismHost>
    <name type="scientific">Homo sapiens</name>
    <name type="common">Human</name>
    <dbReference type="NCBI Taxonomy" id="9606"/>
</organismHost>
<protein>
    <recommendedName>
        <fullName evidence="1">Non-structural protein 3</fullName>
        <shortName evidence="1">NSP3</shortName>
    </recommendedName>
    <alternativeName>
        <fullName evidence="1">NCVP4</fullName>
    </alternativeName>
    <alternativeName>
        <fullName evidence="1">Non-structural RNA-binding protein 34</fullName>
        <shortName evidence="1">NS34</shortName>
    </alternativeName>
</protein>
<dbReference type="EMBL" id="M91436">
    <property type="protein sequence ID" value="AAA47329.1"/>
    <property type="status" value="ALT_FRAME"/>
    <property type="molecule type" value="mRNA"/>
</dbReference>
<dbReference type="EMBL" id="AJ867610">
    <property type="protein sequence ID" value="CAI30288.1"/>
    <property type="molecule type" value="Genomic_RNA"/>
</dbReference>
<dbReference type="SMR" id="Q5K037"/>
<dbReference type="GO" id="GO:0030430">
    <property type="term" value="C:host cell cytoplasm"/>
    <property type="evidence" value="ECO:0007669"/>
    <property type="project" value="UniProtKB-SubCell"/>
</dbReference>
<dbReference type="GO" id="GO:0003723">
    <property type="term" value="F:RNA binding"/>
    <property type="evidence" value="ECO:0007669"/>
    <property type="project" value="UniProtKB-UniRule"/>
</dbReference>
<dbReference type="GO" id="GO:0006417">
    <property type="term" value="P:regulation of translation"/>
    <property type="evidence" value="ECO:0007669"/>
    <property type="project" value="UniProtKB-UniRule"/>
</dbReference>
<dbReference type="CDD" id="cd20714">
    <property type="entry name" value="NSP3_rotavirus"/>
    <property type="match status" value="1"/>
</dbReference>
<dbReference type="HAMAP" id="MF_04090">
    <property type="entry name" value="ROTA_NSP3"/>
    <property type="match status" value="1"/>
</dbReference>
<dbReference type="InterPro" id="IPR002873">
    <property type="entry name" value="Rotavirus_NSP3"/>
</dbReference>
<reference key="1">
    <citation type="submission" date="1992-09" db="EMBL/GenBank/DDBJ databases">
        <title>Primary identification of the seventh RNA segment of the group B rotavirus ADRV.</title>
        <authorList>
            <person name="Mackow E.R."/>
            <person name="Chen G."/>
            <person name="Werner R."/>
            <person name="Fay M.E."/>
            <person name="Tao H."/>
        </authorList>
    </citation>
    <scope>NUCLEOTIDE SEQUENCE [MRNA]</scope>
</reference>
<reference key="2">
    <citation type="journal article" date="2005" name="J. Clin. Virol.">
        <title>The evolution of human group B rotaviruses: correction and an update.</title>
        <authorList>
            <person name="Jiang B."/>
            <person name="Wang Y."/>
            <person name="Glass R.I."/>
            <person name="Fang Z.-Y."/>
        </authorList>
    </citation>
    <scope>NUCLEOTIDE SEQUENCE [GENOMIC RNA]</scope>
</reference>
<organism>
    <name type="scientific">Rotavirus B (isolate RVB/Human/China/ADRV/1982)</name>
    <name type="common">RV-B</name>
    <name type="synonym">Rotavirus B (isolate adult diarrhea rotavirus)</name>
    <dbReference type="NCBI Taxonomy" id="10942"/>
    <lineage>
        <taxon>Viruses</taxon>
        <taxon>Riboviria</taxon>
        <taxon>Orthornavirae</taxon>
        <taxon>Duplornaviricota</taxon>
        <taxon>Resentoviricetes</taxon>
        <taxon>Reovirales</taxon>
        <taxon>Sedoreoviridae</taxon>
        <taxon>Rotavirus</taxon>
        <taxon>Rotavirus B</taxon>
    </lineage>
</organism>